<evidence type="ECO:0000250" key="1"/>
<evidence type="ECO:0000255" key="2"/>
<evidence type="ECO:0000305" key="3"/>
<organism>
    <name type="scientific">Mus musculus</name>
    <name type="common">Mouse</name>
    <dbReference type="NCBI Taxonomy" id="10090"/>
    <lineage>
        <taxon>Eukaryota</taxon>
        <taxon>Metazoa</taxon>
        <taxon>Chordata</taxon>
        <taxon>Craniata</taxon>
        <taxon>Vertebrata</taxon>
        <taxon>Euteleostomi</taxon>
        <taxon>Mammalia</taxon>
        <taxon>Eutheria</taxon>
        <taxon>Euarchontoglires</taxon>
        <taxon>Glires</taxon>
        <taxon>Rodentia</taxon>
        <taxon>Myomorpha</taxon>
        <taxon>Muroidea</taxon>
        <taxon>Muridae</taxon>
        <taxon>Murinae</taxon>
        <taxon>Mus</taxon>
        <taxon>Mus</taxon>
    </lineage>
</organism>
<sequence length="76" mass="8536">MLQLKLFAVLLTCLLLLGQVNSSPVPEVSSAKRSRRMTPFWRGVSLRPIGASCRDDSECITRLCRKRRCSLSVAQE</sequence>
<reference key="1">
    <citation type="journal article" date="2003" name="Protein Sci.">
        <title>Isolation and biochemical characterization of LEAP-2, a novel blood peptide expressed in the liver.</title>
        <authorList>
            <person name="Krause A."/>
            <person name="Sillard R."/>
            <person name="Kleemeier B."/>
            <person name="Kluever E."/>
            <person name="Maronde E."/>
            <person name="Conejo-Garcia J.-R."/>
            <person name="Forssmann W.-G."/>
            <person name="Schulz-Knappe P."/>
            <person name="Nehls M.C."/>
            <person name="Wattler F."/>
            <person name="Wattler S."/>
            <person name="Adermann K."/>
        </authorList>
    </citation>
    <scope>NUCLEOTIDE SEQUENCE [GENOMIC DNA / MRNA]</scope>
    <source>
        <strain>129/Sv</strain>
        <tissue>Small intestine</tissue>
    </source>
</reference>
<reference key="2">
    <citation type="journal article" date="2004" name="Genome Res.">
        <title>The status, quality, and expansion of the NIH full-length cDNA project: the Mammalian Gene Collection (MGC).</title>
        <authorList>
            <consortium name="The MGC Project Team"/>
        </authorList>
    </citation>
    <scope>NUCLEOTIDE SEQUENCE [LARGE SCALE MRNA]</scope>
    <source>
        <tissue>Liver</tissue>
    </source>
</reference>
<name>LEAP2_MOUSE</name>
<feature type="signal peptide" evidence="2">
    <location>
        <begin position="1"/>
        <end position="22"/>
    </location>
</feature>
<feature type="propeptide" id="PRO_0000017359" evidence="2">
    <location>
        <begin position="23"/>
        <end position="36"/>
    </location>
</feature>
<feature type="chain" id="PRO_0000017360" description="Liver-expressed antimicrobial peptide 2">
    <location>
        <begin position="37"/>
        <end position="76"/>
    </location>
</feature>
<feature type="disulfide bond" evidence="1">
    <location>
        <begin position="53"/>
        <end position="64"/>
    </location>
</feature>
<feature type="disulfide bond" evidence="1">
    <location>
        <begin position="59"/>
        <end position="69"/>
    </location>
</feature>
<accession>Q91V13</accession>
<accession>Q5EBH6</accession>
<protein>
    <recommendedName>
        <fullName>Liver-expressed antimicrobial peptide 2</fullName>
        <shortName>LEAP-2</shortName>
    </recommendedName>
</protein>
<dbReference type="EMBL" id="AJ409055">
    <property type="protein sequence ID" value="CAC51472.1"/>
    <property type="molecule type" value="mRNA"/>
</dbReference>
<dbReference type="EMBL" id="AJ409063">
    <property type="protein sequence ID" value="CAC51519.1"/>
    <property type="molecule type" value="Genomic_DNA"/>
</dbReference>
<dbReference type="EMBL" id="BC089593">
    <property type="protein sequence ID" value="AAH89593.1"/>
    <property type="molecule type" value="mRNA"/>
</dbReference>
<dbReference type="CCDS" id="CCDS36150.1"/>
<dbReference type="RefSeq" id="NP_694709.1">
    <property type="nucleotide sequence ID" value="NM_153069.3"/>
</dbReference>
<dbReference type="SMR" id="Q91V13"/>
<dbReference type="FunCoup" id="Q91V13">
    <property type="interactions" value="1"/>
</dbReference>
<dbReference type="STRING" id="10090.ENSMUSP00000044166"/>
<dbReference type="PhosphoSitePlus" id="Q91V13"/>
<dbReference type="PaxDb" id="10090-ENSMUSP00000044166"/>
<dbReference type="ProteomicsDB" id="264931"/>
<dbReference type="Antibodypedia" id="26190">
    <property type="antibodies" value="30 antibodies from 10 providers"/>
</dbReference>
<dbReference type="DNASU" id="259301"/>
<dbReference type="Ensembl" id="ENSMUST00000036045.6">
    <property type="protein sequence ID" value="ENSMUSP00000044166.6"/>
    <property type="gene ID" value="ENSMUSG00000036216.6"/>
</dbReference>
<dbReference type="GeneID" id="259301"/>
<dbReference type="KEGG" id="mmu:259301"/>
<dbReference type="UCSC" id="uc007ivx.1">
    <property type="organism name" value="mouse"/>
</dbReference>
<dbReference type="AGR" id="MGI:2672795"/>
<dbReference type="CTD" id="116842"/>
<dbReference type="MGI" id="MGI:2672795">
    <property type="gene designation" value="Leap2"/>
</dbReference>
<dbReference type="VEuPathDB" id="HostDB:ENSMUSG00000036216"/>
<dbReference type="eggNOG" id="ENOG502SD5B">
    <property type="taxonomic scope" value="Eukaryota"/>
</dbReference>
<dbReference type="GeneTree" id="ENSGT00390000013467"/>
<dbReference type="HOGENOM" id="CLU_178163_0_0_1"/>
<dbReference type="InParanoid" id="Q91V13"/>
<dbReference type="OMA" id="CITMLCR"/>
<dbReference type="OrthoDB" id="9450163at2759"/>
<dbReference type="PhylomeDB" id="Q91V13"/>
<dbReference type="TreeFam" id="TF336274"/>
<dbReference type="Reactome" id="R-MMU-6803157">
    <property type="pathway name" value="Antimicrobial peptides"/>
</dbReference>
<dbReference type="BioGRID-ORCS" id="259301">
    <property type="hits" value="1 hit in 75 CRISPR screens"/>
</dbReference>
<dbReference type="ChiTaRS" id="Leap2">
    <property type="organism name" value="mouse"/>
</dbReference>
<dbReference type="PRO" id="PR:Q91V13"/>
<dbReference type="Proteomes" id="UP000000589">
    <property type="component" value="Chromosome 11"/>
</dbReference>
<dbReference type="RNAct" id="Q91V13">
    <property type="molecule type" value="protein"/>
</dbReference>
<dbReference type="Bgee" id="ENSMUSG00000036216">
    <property type="expression patterns" value="Expressed in small intestine Peyer's patch and 42 other cell types or tissues"/>
</dbReference>
<dbReference type="GO" id="GO:0005576">
    <property type="term" value="C:extracellular region"/>
    <property type="evidence" value="ECO:0007669"/>
    <property type="project" value="UniProtKB-SubCell"/>
</dbReference>
<dbReference type="GO" id="GO:0042742">
    <property type="term" value="P:defense response to bacterium"/>
    <property type="evidence" value="ECO:0007669"/>
    <property type="project" value="UniProtKB-KW"/>
</dbReference>
<dbReference type="FunFam" id="4.10.40.50:FF:000001">
    <property type="entry name" value="liver-expressed antimicrobial peptide 2"/>
    <property type="match status" value="1"/>
</dbReference>
<dbReference type="Gene3D" id="4.10.40.50">
    <property type="match status" value="1"/>
</dbReference>
<dbReference type="InterPro" id="IPR009955">
    <property type="entry name" value="LEAP-2"/>
</dbReference>
<dbReference type="PANTHER" id="PTHR21007">
    <property type="entry name" value="LIVER EXPRESSED ANTIMICROBIAL PEPTIDE 2"/>
    <property type="match status" value="1"/>
</dbReference>
<dbReference type="PANTHER" id="PTHR21007:SF1">
    <property type="entry name" value="LIVER-EXPRESSED ANTIMICROBIAL PEPTIDE 2"/>
    <property type="match status" value="1"/>
</dbReference>
<dbReference type="Pfam" id="PF07359">
    <property type="entry name" value="LEAP-2"/>
    <property type="match status" value="1"/>
</dbReference>
<keyword id="KW-0044">Antibiotic</keyword>
<keyword id="KW-0929">Antimicrobial</keyword>
<keyword id="KW-0165">Cleavage on pair of basic residues</keyword>
<keyword id="KW-1015">Disulfide bond</keyword>
<keyword id="KW-1185">Reference proteome</keyword>
<keyword id="KW-0964">Secreted</keyword>
<keyword id="KW-0732">Signal</keyword>
<proteinExistence type="inferred from homology"/>
<gene>
    <name type="primary">Leap2</name>
</gene>
<comment type="function">
    <text>Has an antimicrobial activity.</text>
</comment>
<comment type="subcellular location">
    <subcellularLocation>
        <location>Secreted</location>
    </subcellularLocation>
</comment>
<comment type="similarity">
    <text evidence="3">Belongs to the LEAP2 family.</text>
</comment>